<gene>
    <name evidence="9" type="primary">NPS2</name>
    <name type="ORF">FG05372</name>
    <name type="ORF">FGRAMPH1_01T17751</name>
</gene>
<proteinExistence type="evidence at transcript level"/>
<name>NPS2_GIBZE</name>
<keyword id="KW-0436">Ligase</keyword>
<keyword id="KW-0511">Multifunctional enzyme</keyword>
<keyword id="KW-0596">Phosphopantetheine</keyword>
<keyword id="KW-0597">Phosphoprotein</keyword>
<keyword id="KW-1185">Reference proteome</keyword>
<dbReference type="EC" id="6.3.2.-" evidence="12"/>
<dbReference type="EMBL" id="HG970334">
    <property type="protein sequence ID" value="SCB64745.1"/>
    <property type="status" value="ALT_SEQ"/>
    <property type="molecule type" value="Genomic_DNA"/>
</dbReference>
<dbReference type="RefSeq" id="XP_011323896.1">
    <property type="nucleotide sequence ID" value="XM_011325594.1"/>
</dbReference>
<dbReference type="SMR" id="I1RN14"/>
<dbReference type="STRING" id="229533.I1RN14"/>
<dbReference type="KEGG" id="fgr:FGSG_05372"/>
<dbReference type="eggNOG" id="KOG1178">
    <property type="taxonomic scope" value="Eukaryota"/>
</dbReference>
<dbReference type="HOGENOM" id="CLU_000092_2_0_1"/>
<dbReference type="InParanoid" id="I1RN14"/>
<dbReference type="OrthoDB" id="85518at110618"/>
<dbReference type="PHI-base" id="PHI:3658"/>
<dbReference type="Proteomes" id="UP000070720">
    <property type="component" value="Chromosome 3"/>
</dbReference>
<dbReference type="GO" id="GO:0005737">
    <property type="term" value="C:cytoplasm"/>
    <property type="evidence" value="ECO:0007669"/>
    <property type="project" value="TreeGrafter"/>
</dbReference>
<dbReference type="GO" id="GO:0016874">
    <property type="term" value="F:ligase activity"/>
    <property type="evidence" value="ECO:0007669"/>
    <property type="project" value="UniProtKB-KW"/>
</dbReference>
<dbReference type="GO" id="GO:0031177">
    <property type="term" value="F:phosphopantetheine binding"/>
    <property type="evidence" value="ECO:0007669"/>
    <property type="project" value="InterPro"/>
</dbReference>
<dbReference type="GO" id="GO:0043041">
    <property type="term" value="P:amino acid activation for nonribosomal peptide biosynthetic process"/>
    <property type="evidence" value="ECO:0007669"/>
    <property type="project" value="TreeGrafter"/>
</dbReference>
<dbReference type="GO" id="GO:0044550">
    <property type="term" value="P:secondary metabolite biosynthetic process"/>
    <property type="evidence" value="ECO:0007669"/>
    <property type="project" value="TreeGrafter"/>
</dbReference>
<dbReference type="CDD" id="cd05918">
    <property type="entry name" value="A_NRPS_SidN3_like"/>
    <property type="match status" value="3"/>
</dbReference>
<dbReference type="CDD" id="cd19542">
    <property type="entry name" value="CT_NRPS-like"/>
    <property type="match status" value="1"/>
</dbReference>
<dbReference type="FunFam" id="3.40.50.980:FF:000001">
    <property type="entry name" value="Non-ribosomal peptide synthetase"/>
    <property type="match status" value="2"/>
</dbReference>
<dbReference type="FunFam" id="3.30.300.30:FF:000015">
    <property type="entry name" value="Nonribosomal peptide synthase SidD"/>
    <property type="match status" value="1"/>
</dbReference>
<dbReference type="FunFam" id="3.30.300.30:FF:000033">
    <property type="entry name" value="Nonribosomal siderophore peptide synthase SidC"/>
    <property type="match status" value="1"/>
</dbReference>
<dbReference type="FunFam" id="3.40.50.12780:FF:000024">
    <property type="entry name" value="Nonribosomal siderophore peptide synthase SidC"/>
    <property type="match status" value="2"/>
</dbReference>
<dbReference type="Gene3D" id="3.30.300.30">
    <property type="match status" value="3"/>
</dbReference>
<dbReference type="Gene3D" id="1.10.1200.10">
    <property type="entry name" value="ACP-like"/>
    <property type="match status" value="6"/>
</dbReference>
<dbReference type="Gene3D" id="3.30.559.10">
    <property type="entry name" value="Chloramphenicol acetyltransferase-like domain"/>
    <property type="match status" value="6"/>
</dbReference>
<dbReference type="Gene3D" id="3.40.50.12780">
    <property type="entry name" value="N-terminal domain of ligase-like"/>
    <property type="match status" value="3"/>
</dbReference>
<dbReference type="Gene3D" id="3.30.559.30">
    <property type="entry name" value="Nonribosomal peptide synthetase, condensation domain"/>
    <property type="match status" value="6"/>
</dbReference>
<dbReference type="InterPro" id="IPR010071">
    <property type="entry name" value="AA_adenyl_dom"/>
</dbReference>
<dbReference type="InterPro" id="IPR036736">
    <property type="entry name" value="ACP-like_sf"/>
</dbReference>
<dbReference type="InterPro" id="IPR045851">
    <property type="entry name" value="AMP-bd_C_sf"/>
</dbReference>
<dbReference type="InterPro" id="IPR020845">
    <property type="entry name" value="AMP-binding_CS"/>
</dbReference>
<dbReference type="InterPro" id="IPR000873">
    <property type="entry name" value="AMP-dep_synth/lig_dom"/>
</dbReference>
<dbReference type="InterPro" id="IPR042099">
    <property type="entry name" value="ANL_N_sf"/>
</dbReference>
<dbReference type="InterPro" id="IPR023213">
    <property type="entry name" value="CAT-like_dom_sf"/>
</dbReference>
<dbReference type="InterPro" id="IPR001242">
    <property type="entry name" value="Condensatn"/>
</dbReference>
<dbReference type="InterPro" id="IPR020806">
    <property type="entry name" value="PKS_PP-bd"/>
</dbReference>
<dbReference type="InterPro" id="IPR009081">
    <property type="entry name" value="PP-bd_ACP"/>
</dbReference>
<dbReference type="InterPro" id="IPR006162">
    <property type="entry name" value="Ppantetheine_attach_site"/>
</dbReference>
<dbReference type="NCBIfam" id="TIGR01733">
    <property type="entry name" value="AA-adenyl-dom"/>
    <property type="match status" value="3"/>
</dbReference>
<dbReference type="NCBIfam" id="NF003417">
    <property type="entry name" value="PRK04813.1"/>
    <property type="match status" value="3"/>
</dbReference>
<dbReference type="PANTHER" id="PTHR45527:SF1">
    <property type="entry name" value="FATTY ACID SYNTHASE"/>
    <property type="match status" value="1"/>
</dbReference>
<dbReference type="PANTHER" id="PTHR45527">
    <property type="entry name" value="NONRIBOSOMAL PEPTIDE SYNTHETASE"/>
    <property type="match status" value="1"/>
</dbReference>
<dbReference type="Pfam" id="PF00501">
    <property type="entry name" value="AMP-binding"/>
    <property type="match status" value="3"/>
</dbReference>
<dbReference type="Pfam" id="PF00668">
    <property type="entry name" value="Condensation"/>
    <property type="match status" value="6"/>
</dbReference>
<dbReference type="Pfam" id="PF00550">
    <property type="entry name" value="PP-binding"/>
    <property type="match status" value="6"/>
</dbReference>
<dbReference type="SMART" id="SM00823">
    <property type="entry name" value="PKS_PP"/>
    <property type="match status" value="5"/>
</dbReference>
<dbReference type="SMART" id="SM01294">
    <property type="entry name" value="PKS_PP_betabranch"/>
    <property type="match status" value="1"/>
</dbReference>
<dbReference type="SUPFAM" id="SSF56801">
    <property type="entry name" value="Acetyl-CoA synthetase-like"/>
    <property type="match status" value="3"/>
</dbReference>
<dbReference type="SUPFAM" id="SSF47336">
    <property type="entry name" value="ACP-like"/>
    <property type="match status" value="6"/>
</dbReference>
<dbReference type="SUPFAM" id="SSF52777">
    <property type="entry name" value="CoA-dependent acyltransferases"/>
    <property type="match status" value="12"/>
</dbReference>
<dbReference type="PROSITE" id="PS00455">
    <property type="entry name" value="AMP_BINDING"/>
    <property type="match status" value="2"/>
</dbReference>
<dbReference type="PROSITE" id="PS50075">
    <property type="entry name" value="CARRIER"/>
    <property type="match status" value="6"/>
</dbReference>
<dbReference type="PROSITE" id="PS00012">
    <property type="entry name" value="PHOSPHOPANTETHEINE"/>
    <property type="match status" value="5"/>
</dbReference>
<accession>I1RN14</accession>
<accession>A0A098DYP3</accession>
<accession>A0A1C3YK55</accession>
<organism>
    <name type="scientific">Gibberella zeae (strain ATCC MYA-4620 / CBS 123657 / FGSC 9075 / NRRL 31084 / PH-1)</name>
    <name type="common">Wheat head blight fungus</name>
    <name type="synonym">Fusarium graminearum</name>
    <dbReference type="NCBI Taxonomy" id="229533"/>
    <lineage>
        <taxon>Eukaryota</taxon>
        <taxon>Fungi</taxon>
        <taxon>Dikarya</taxon>
        <taxon>Ascomycota</taxon>
        <taxon>Pezizomycotina</taxon>
        <taxon>Sordariomycetes</taxon>
        <taxon>Hypocreomycetidae</taxon>
        <taxon>Hypocreales</taxon>
        <taxon>Nectriaceae</taxon>
        <taxon>Fusarium</taxon>
    </lineage>
</organism>
<feature type="chain" id="PRO_0000444385" description="Nonribosomal peptide synthetase 2">
    <location>
        <begin position="1"/>
        <end position="4841"/>
    </location>
</feature>
<feature type="domain" description="Carrier 1" evidence="4">
    <location>
        <begin position="531"/>
        <end position="604"/>
    </location>
</feature>
<feature type="domain" description="Carrier 2" evidence="4">
    <location>
        <begin position="1587"/>
        <end position="1665"/>
    </location>
</feature>
<feature type="domain" description="Carrier 3" evidence="4">
    <location>
        <begin position="2139"/>
        <end position="2212"/>
    </location>
</feature>
<feature type="domain" description="Carrier 4" evidence="4">
    <location>
        <begin position="3219"/>
        <end position="3293"/>
    </location>
</feature>
<feature type="domain" description="Carrier 5" evidence="4">
    <location>
        <begin position="3759"/>
        <end position="3838"/>
    </location>
</feature>
<feature type="domain" description="Carrier 6" evidence="4">
    <location>
        <begin position="4318"/>
        <end position="4394"/>
    </location>
</feature>
<feature type="region of interest" description="Adenylation 1" evidence="2 3">
    <location>
        <begin position="26"/>
        <end position="429"/>
    </location>
</feature>
<feature type="region of interest" description="Condensation 1" evidence="2 3">
    <location>
        <begin position="640"/>
        <end position="1042"/>
    </location>
</feature>
<feature type="region of interest" description="Adenylation 2" evidence="2 3">
    <location>
        <begin position="1072"/>
        <end position="1463"/>
    </location>
</feature>
<feature type="region of interest" description="Condensation 2" evidence="2 3">
    <location>
        <begin position="1702"/>
        <end position="2043"/>
    </location>
</feature>
<feature type="region of interest" description="Condensation 3" evidence="2 3">
    <location>
        <begin position="2248"/>
        <end position="2663"/>
    </location>
</feature>
<feature type="region of interest" description="Adenylation 3" evidence="2 3">
    <location>
        <begin position="2695"/>
        <end position="3090"/>
    </location>
</feature>
<feature type="region of interest" description="Condensation 4" evidence="2 3">
    <location>
        <begin position="3333"/>
        <end position="3735"/>
    </location>
</feature>
<feature type="region of interest" description="Condensation 5" evidence="2 3">
    <location>
        <begin position="3873"/>
        <end position="4242"/>
    </location>
</feature>
<feature type="region of interest" description="Condensation 6" evidence="2 3">
    <location>
        <begin position="4430"/>
        <end position="4726"/>
    </location>
</feature>
<feature type="modified residue" description="O-(pantetheine 4'-phosphoryl)serine" evidence="4">
    <location>
        <position position="565"/>
    </location>
</feature>
<feature type="modified residue" description="O-(pantetheine 4'-phosphoryl)serine" evidence="4">
    <location>
        <position position="1625"/>
    </location>
</feature>
<feature type="modified residue" description="O-(pantetheine 4'-phosphoryl)serine" evidence="4">
    <location>
        <position position="2173"/>
    </location>
</feature>
<feature type="modified residue" description="O-(pantetheine 4'-phosphoryl)serine" evidence="4">
    <location>
        <position position="3253"/>
    </location>
</feature>
<feature type="modified residue" description="O-(pantetheine 4'-phosphoryl)serine" evidence="4">
    <location>
        <position position="3799"/>
    </location>
</feature>
<feature type="modified residue" description="O-(pantetheine 4'-phosphoryl)serine" evidence="4">
    <location>
        <position position="4355"/>
    </location>
</feature>
<sequence length="4841" mass="536040">MDITGLSIMNAQASRQPGPHLLHQLVKPPNQNVALDYMGSNQRVNITYHQLHEAATSLASRITKTSGSAQGQFVVPLLIHQSPSLYISLLAILKAGGAFCPLNIDAPPERVKFILDDVAATVVLVSKELASAIPNGISAAVIIVDEEEDQSSTLQSLSTEVSSRVPGPEDLAYVMYTSGSTGTPKGVGISHDAATQALIAHDRHIPSFSRFLQFAAPTFDVSVFEIFFPFFRGATLVSVRRIEMLDDLPGVLRTMEVDACELTPTVAGSLLRTRSNAPELKVLLTIGEMLNAPVVEEFGGDENRPSMLWAMYGPTEATIHCTLQAEFSSDSSTGNIGVPLDTVSCFIIEVPDSDSEQSEIRVLPQGEVGELAVGGCQLATGYINRPEQTNSVFIDSPFGRIYRTGDKARLLPNGKLECFGRLSDGQVKLRGQRLELGEVEQAVLRTSGCHSAVAAVARSILVVFCAVDAGVTEDAVLKHCGDWLPQYMVPGEVVLMSEFPRLPSGKVDRKRLKAEYEEHKEAMLEDIADSEPVDEFESSLLVVVSRVMNFKVNKSTSLAAIGMDSLSAIKLASSLRNAGYSIDTTDLLTAKTVFDIIFAARRQIQNQTVSSLPFSTNLSLDFGQILQQNATLADMSGLIEEIIPCTPLQAAMLAETSHNSTAYCNQVELAIPLSYSAYQISESFAQLSQKNPILRTGFAIVDRRFVTLVYGELRPEQIKVVDQVQGDFSLSSPEDFCSPMRLQIQRDSVDEKSRVLLQIHHSLYDGWSMDVLLSDWSKLLLQEPVSEHSSFREVVKFYQQLQTSDDARMFWTENLAGWKQTPLPKLRDKLVHSGEVLSFRRPMSLSRRRVTAEVQRNGFSPQVLFQASLALLWTSVTGARDITIGSVTSGRTIPVIDIEQIIGPCIAALPVRIDFDKISIGLELLKNLHSSNRKIMQYCTVSLSEVKKLVGLQLGESLYDVLFVYQESLASSERTQCMVKEATHLDRLETPILFEVEPTEDGFTLQVTYHEAIVPPATVQHMVDQFEALAHSILERPTQEIKCALREIKCTPSVDNINASPPQRVPDLARLFEDVVRKHPEENALLFYHSLKVANNVVWSFRELNNEANQIAHYLQSCGIQVGQVVAVIMEKSPALYASILAIIKCGCGYLPILPSTPLARTREILLQAEIKYCLVDSSPDQLASMLELSTITVNTNLFNEFSTANLDNEVDGSRLAYVIYTSGTTGTPKGVAVQQQSIVANIEHLEATYPKPSSSQGRLLQACSQAFDVSVFEIFYTWCAGMCLCAGTNDTILEDIERSIRDLEITHLSMTPTVAALVEPSNVPSVQFLVTAGEPMTQAVHNKWCHQLWQGYGPSETTNICTVKKMATDDHIEHLGHVFPNTSAVVLSPATLDTVPLNWVGEFCFGGAQVAQGYLNMPELTAQKFIHHPQYGKLYRSGDMGRMLPDGSLVILGRIDDQVKLRGQRIEIGEINSTVTMAGFATSAATVLVEHEESTIKQLALFFVPQHDPTEFRVLEIDNEVQQSLAAHMQSRLPGYMVPSYLVPISSMPMTSSGKVDKRRLHDCFDKLDRHYLEKVSRSSGDNPDEGDWSRMDLVISEVIKESVAASAGGFGRWTPFTVLGVDSISAIDLARALNAKLGARVAVSDILRNPTIAQLAKHLEGKPLYEETAFEGTQREFFPAAFTAAIKEVFLGESKAIKDILPCTPLQEAMLSRGQRGYYNKVLLRLKAEPGAIRSYWEVMSKRHDILRTCFATTTDSKHAIAQVVLEDWEIPWRTFDISEPSFDGAIEEHLKSLPDPVDSRTPPVSLALLRYRGSAFLSFICHHALYDGVAMERLLKEVEALAGGEDLLPPVSYKEFLEISTNLPNDTEEFWQQHLRGYKALSIFTQSSSSEIDQSTCTTSLDMPLANLQGRLRDFGTTLLSVCQASWATVLAMTYRQPDVCFGNVMSGRTLDIDGLERLVAPCFNTIPIRVALPTTSSNIDMVKHLQKLNTEMLTYQFTPLRLIQRSINRTGKHIFDTLLLLQKPLQDIDQTVWELEADSGDMDIPLVCEVVPCPGLNSLVINLHRDMSIVTEDVASAMADAFKVILKAILTAPHSTPMTAEDLPDSLRSILQQLKPQYDKKDNTGNMPDGEEEWSEVELDVRQVLAKLSGVSEQQIKRRTTIFQLGLDSINAVQVASILRQRGFIVSASDVIECPSCSKIAAKLLENRSRTKSEDLKRYDIGRFSHQVYSEIAGRLPQTATIEAVLPCTPLQSAMLASFIQSGGENYLNAMEYIVTDEISLESLTKAWQLLHERHPMLRTGFVPVQHPDATFAMVRYAPGSMKTPVSIAESEGDEVSDLLNLKGNTSERVLTALHQPPWTVVLAQTPQQTSMKFVAHHVLYDAHALQMMLYDLSRLVKSERLPPVSRIEPAVSAILINSLDEQGSEKAFWEAKASSTVVNKFPLMTPLRVESRCMLADTTVASLSFTKLKRATQASNVTIQAVIQAAWTRVLASYLGENSVVFGVALSGRTTDETKDAPFPCLNTVPVVGNNVTSNAELVSYMMEYNQRLHKHQFSPLGKVQRWLGHPTGPVFDTLIAYQKMADAGSSSLPWKLVKDEARVEYSVSLEIEPTENDHVRLCITYYNDILPREQAHLLMKQFDSSLNHIACNHLATEDEAFNLSPDLYSVLPPSHPVLDAPVQFLHQFVELGAAVHPNKLALEFVSAFDGDTCLKKQWDYRQLNIMGNRVANMLQEKLTPGSIVAIHFDKCPEAYFSILGILKAGCSFVALDPSAPKARKQFIVEDSRAPCLLTRSLEDLDFEAKTAILEVKVESLSVLEEEELIFQPAISPSDTCYCLYTSGTTGTPKGCEITHDNAVQAMMAFQELFKGHWDADSRWLQFAALHFDVSVLEQYWSWSVGMAVVAAPKDLILDDLTASINKLEITHIDLTPSLARLTHPDEIPSLCRGVFITGGEQLKQEILDVWGPKAVIYNAYGPTEATIGVTMFQRVPVNGRPSNIGKQFPNVGSFIFKQNTNTPVLRGAVGELCVSGRLVGKGYLNRPQLTEERFPTLEEFGERVYRTGDLVRVLHDGCFDFLGRADDQVKLRGQRLEIAEINHIIRTDVTEVHDAATIVARHGTSGKDVLVSFIVSEHLTTGPLRVVSDDEGLATKAKEACRAKLPGYMVPTYILLLPYIPLSSNNKAEIKDLKKLFSELAPEQLMELSHAATAPVSRGAQDILVLLYDALAQFSNISKDDISPTTSIFDVGVDSITALKLASLLKSRGLHAVSPAMLLKNPVIGDLANCLAKAASSQRQKLAREIKQSIQAYAHRHRGLVYSSLNIGPADIEYIAPCSPLQEGIISRSLTSTKPGAYFNTFQLKLHQSTTTTKFQQAWKDLVFSESILRTVFVPSTDGFLQVALRNPLFPWESTAFGSNELAEYYFAEQKENWIQRNKSSITQPLLLTYVETPTSRLFTVHIFHALYDGNSFDLMMDRVAANYAGTSVQKAPSFFEALTSGPLTRHDNCKGFWEKHLEGWVPSSITAHERSTHGSVVVAERDMPISNFEAMRSSHNVTLQAVIMALWTSVLQNLVESQITIGVVVSGRAVDLPGVENTIGPLFNTVPFFRQAVQHEDWKSLVRRCHDFNASVLDFQHVPLKNIQKWCSHNKALFDTLFTYQIDEAKTDDNELPFEIQNSEVTPDYPLALEAVYTKTGKLRFTLVAQGHVVSQSILDNLLNEIERFADLAAESPQSEVPVPQFKIPIVDDFHSGNAEKDSQNSFEWTSEAQAIQNEISVLVGINPAEIAQDVSILELGLDSIDVIKLAAKLKRKSINLAPSQIMRQQTIAKMITELASITNDSSCPPRDNFLSRIGYRLREHLEASEVDISNVESVLPPTHLQESMVAGMIHSGFEAYFNHDVLRVSDHVDTTQLIQAWKDLIHQTPVLRTGFYQVESQDFDMTFCQVVSKSIDIDFEATRVEDLSELHQITDAAKSAAKNGRGQKKLFQLKLVVIGQERYMVLSIAHALYDGWSLSLLFQDLQALLEGRLITRPPVEQFIARVMESTTSKAKDFWMQYLQDAPSSTILTKVQLPTVEEKVQRFESVSKVSLLEIDAACKRLSVSLQVLCQACWAVTLARQIRSTDVTFGTVLSGRDFDGADSLVFPTMNTVALRCILHGSAAEFLRYLEENMTDIRDFQHYPLRKAQSAAKVDGQDLFNTLFILQRSPVSSDPADRPLLTSVEASSSTEYPLCVEAEAVSDSLVWRLALQPQCSWNGGPQSLLETLDNVMSFLLKSKDPEILSFSERGVSICGTPPVALPESIIHEDASDNYSSRDEKIEWNQNEIGIREVLFQVSNVPILSIKLSDNLYHLGLDSISAIKVSSLLRKAGINLRPQDLIKSSSISEMAQKADTKLKKPLQTLETVEDWLPPADIDVNKLLADNGINKDEAEVLPALPMQVYMLTAWENSDGSVFFPEFPCRIKTSASLGEIDQAWGKLVSETPLLRTCFASTQSSTIPFIQIILKELGIPLSSLQPGERSNCCIRPLVEVNIEQEDKDTWLLRLKLHHALYDGVSLPALLQRLSELLNGSGTMENKGLSQWKQFTMRHTTDEARIARREFWTSYLKGSSSSPIIANSDTDVKMRTSHLNRSAISDISSIQALATQSGVSFQSLFLSAYARALAKQNNVSDTVFGLYLANRAAGENLPQTYPTLNLVPLRVSSPINRPLAAVAADIQRDIHLITSESRAEVGLWEIAQWTGIRITSFVNFLTLPGDTDPTGNSITVLPETNTGVVVKDNLPDRPRTPYLESIFRNDIPMAIDIEASVDGKNLAIGVFGSLQQISSEEALTLVANIAEILDGGI</sequence>
<evidence type="ECO:0000250" key="1">
    <source>
        <dbReference type="UniProtKB" id="A0A144KPJ6"/>
    </source>
</evidence>
<evidence type="ECO:0000250" key="2">
    <source>
        <dbReference type="UniProtKB" id="Q5D6D7"/>
    </source>
</evidence>
<evidence type="ECO:0000255" key="3"/>
<evidence type="ECO:0000255" key="4">
    <source>
        <dbReference type="PROSITE-ProRule" id="PRU00258"/>
    </source>
</evidence>
<evidence type="ECO:0000269" key="5">
    <source>
    </source>
</evidence>
<evidence type="ECO:0000269" key="6">
    <source>
    </source>
</evidence>
<evidence type="ECO:0000269" key="7">
    <source>
    </source>
</evidence>
<evidence type="ECO:0000269" key="8">
    <source>
    </source>
</evidence>
<evidence type="ECO:0000303" key="9">
    <source>
    </source>
</evidence>
<evidence type="ECO:0000303" key="10">
    <source>
    </source>
</evidence>
<evidence type="ECO:0000305" key="11"/>
<evidence type="ECO:0000305" key="12">
    <source>
    </source>
</evidence>
<protein>
    <recommendedName>
        <fullName evidence="9">Nonribosomal peptide synthetase 2</fullName>
        <shortName evidence="9">NPRS 2</shortName>
        <ecNumber evidence="12">6.3.2.-</ecNumber>
    </recommendedName>
    <alternativeName>
        <fullName evidence="10">Ferricrocin synthetase</fullName>
    </alternativeName>
    <alternativeName>
        <fullName evidence="10">Intracellular siderophore synthetase</fullName>
    </alternativeName>
</protein>
<reference key="1">
    <citation type="journal article" date="2007" name="Science">
        <title>The Fusarium graminearum genome reveals a link between localized polymorphism and pathogen specialization.</title>
        <authorList>
            <person name="Cuomo C.A."/>
            <person name="Gueldener U."/>
            <person name="Xu J.-R."/>
            <person name="Trail F."/>
            <person name="Turgeon B.G."/>
            <person name="Di Pietro A."/>
            <person name="Walton J.D."/>
            <person name="Ma L.-J."/>
            <person name="Baker S.E."/>
            <person name="Rep M."/>
            <person name="Adam G."/>
            <person name="Antoniw J."/>
            <person name="Baldwin T."/>
            <person name="Calvo S.E."/>
            <person name="Chang Y.-L."/>
            <person name="DeCaprio D."/>
            <person name="Gale L.R."/>
            <person name="Gnerre S."/>
            <person name="Goswami R.S."/>
            <person name="Hammond-Kosack K."/>
            <person name="Harris L.J."/>
            <person name="Hilburn K."/>
            <person name="Kennell J.C."/>
            <person name="Kroken S."/>
            <person name="Magnuson J.K."/>
            <person name="Mannhaupt G."/>
            <person name="Mauceli E.W."/>
            <person name="Mewes H.-W."/>
            <person name="Mitterbauer R."/>
            <person name="Muehlbauer G."/>
            <person name="Muensterkoetter M."/>
            <person name="Nelson D."/>
            <person name="O'Donnell K."/>
            <person name="Ouellet T."/>
            <person name="Qi W."/>
            <person name="Quesneville H."/>
            <person name="Roncero M.I.G."/>
            <person name="Seong K.-Y."/>
            <person name="Tetko I.V."/>
            <person name="Urban M."/>
            <person name="Waalwijk C."/>
            <person name="Ward T.J."/>
            <person name="Yao J."/>
            <person name="Birren B.W."/>
            <person name="Kistler H.C."/>
        </authorList>
    </citation>
    <scope>NUCLEOTIDE SEQUENCE [LARGE SCALE GENOMIC DNA]</scope>
    <source>
        <strain>ATCC MYA-4620 / CBS 123657 / FGSC 9075 / NRRL 31084 / PH-1</strain>
    </source>
</reference>
<reference key="2">
    <citation type="journal article" date="2010" name="Nature">
        <title>Comparative genomics reveals mobile pathogenicity chromosomes in Fusarium.</title>
        <authorList>
            <person name="Ma L.-J."/>
            <person name="van der Does H.C."/>
            <person name="Borkovich K.A."/>
            <person name="Coleman J.J."/>
            <person name="Daboussi M.-J."/>
            <person name="Di Pietro A."/>
            <person name="Dufresne M."/>
            <person name="Freitag M."/>
            <person name="Grabherr M."/>
            <person name="Henrissat B."/>
            <person name="Houterman P.M."/>
            <person name="Kang S."/>
            <person name="Shim W.-B."/>
            <person name="Woloshuk C."/>
            <person name="Xie X."/>
            <person name="Xu J.-R."/>
            <person name="Antoniw J."/>
            <person name="Baker S.E."/>
            <person name="Bluhm B.H."/>
            <person name="Breakspear A."/>
            <person name="Brown D.W."/>
            <person name="Butchko R.A.E."/>
            <person name="Chapman S."/>
            <person name="Coulson R."/>
            <person name="Coutinho P.M."/>
            <person name="Danchin E.G.J."/>
            <person name="Diener A."/>
            <person name="Gale L.R."/>
            <person name="Gardiner D.M."/>
            <person name="Goff S."/>
            <person name="Hammond-Kosack K.E."/>
            <person name="Hilburn K."/>
            <person name="Hua-Van A."/>
            <person name="Jonkers W."/>
            <person name="Kazan K."/>
            <person name="Kodira C.D."/>
            <person name="Koehrsen M."/>
            <person name="Kumar L."/>
            <person name="Lee Y.-H."/>
            <person name="Li L."/>
            <person name="Manners J.M."/>
            <person name="Miranda-Saavedra D."/>
            <person name="Mukherjee M."/>
            <person name="Park G."/>
            <person name="Park J."/>
            <person name="Park S.-Y."/>
            <person name="Proctor R.H."/>
            <person name="Regev A."/>
            <person name="Ruiz-Roldan M.C."/>
            <person name="Sain D."/>
            <person name="Sakthikumar S."/>
            <person name="Sykes S."/>
            <person name="Schwartz D.C."/>
            <person name="Turgeon B.G."/>
            <person name="Wapinski I."/>
            <person name="Yoder O."/>
            <person name="Young S."/>
            <person name="Zeng Q."/>
            <person name="Zhou S."/>
            <person name="Galagan J."/>
            <person name="Cuomo C.A."/>
            <person name="Kistler H.C."/>
            <person name="Rep M."/>
        </authorList>
    </citation>
    <scope>GENOME REANNOTATION</scope>
    <source>
        <strain>ATCC MYA-4620 / CBS 123657 / FGSC 9075 / NRRL 31084 / PH-1</strain>
    </source>
</reference>
<reference key="3">
    <citation type="journal article" date="2015" name="BMC Genomics">
        <title>The completed genome sequence of the pathogenic ascomycete fungus Fusarium graminearum.</title>
        <authorList>
            <person name="King R."/>
            <person name="Urban M."/>
            <person name="Hammond-Kosack M.C.U."/>
            <person name="Hassani-Pak K."/>
            <person name="Hammond-Kosack K.E."/>
        </authorList>
    </citation>
    <scope>NUCLEOTIDE SEQUENCE [LARGE SCALE GENOMIC DNA]</scope>
    <source>
        <strain>ATCC MYA-4620 / CBS 123657 / FGSC 9075 / NRRL 31084 / PH-1</strain>
    </source>
</reference>
<reference key="4">
    <citation type="journal article" date="2006" name="Plant Cell">
        <title>NPS6, encoding a nonribosomal peptide synthetase involved in siderophore-mediated iron metabolism, is a conserved virulence determinant of plant pathogenic ascomycetes.</title>
        <authorList>
            <person name="Oide S."/>
            <person name="Moeder W."/>
            <person name="Krasnoff S."/>
            <person name="Gibson D."/>
            <person name="Haas H."/>
            <person name="Yoshioka K."/>
            <person name="Turgeon B.G."/>
        </authorList>
    </citation>
    <scope>FUNCTION</scope>
    <scope>DISRUPTION PHENOTYPE</scope>
    <scope>INDUCTION</scope>
    <scope>PATHWAY</scope>
</reference>
<reference key="5">
    <citation type="journal article" date="2007" name="Curr. Genet.">
        <title>Nonribosomal peptide synthetase (NPS) genes in Fusarium graminearum, F. culmorum and F. pseudograminearium and identification of NPS2 as the producer of ferricrocin.</title>
        <authorList>
            <person name="Tobiasen C."/>
            <person name="Aahman J."/>
            <person name="Ravnholt K.S."/>
            <person name="Bjerrum M.J."/>
            <person name="Grell M.N."/>
            <person name="Giese H."/>
        </authorList>
    </citation>
    <scope>FUNCTION</scope>
    <scope>DISRUPTION PHENOTYPE</scope>
    <scope>PATHWAY</scope>
</reference>
<reference key="6">
    <citation type="journal article" date="2007" name="Eukaryot. Cell">
        <title>Intracellular siderophores are essential for ascomycete sexual development in heterothallic Cochliobolus heterostrophus and homothallic Gibberella zeae.</title>
        <authorList>
            <person name="Oide S."/>
            <person name="Krasnoff S.B."/>
            <person name="Gibson D.M."/>
            <person name="Turgeon B.G."/>
        </authorList>
    </citation>
    <scope>FUNCTION</scope>
    <scope>DISRUPTION PHENOTYPE</scope>
    <scope>PATHWAY</scope>
</reference>
<reference key="7">
    <citation type="journal article" date="2007" name="Mol. Plant Pathol.">
        <title>The siderophore biosynthetic gene SID1, but not the ferroxidase gene FET3, is required for full Fusarium graminearum virulence.</title>
        <authorList>
            <person name="Greenshields D.L."/>
            <person name="Liu G."/>
            <person name="Feng J."/>
            <person name="Selvaraj G."/>
            <person name="Wei Y."/>
        </authorList>
    </citation>
    <scope>FUNCTION</scope>
</reference>
<comment type="function">
    <text evidence="5 6 7 8">Nonribosomal peptide synthetase; part of the gene cluster that mediates the biosynthesis of hydroxamate-containing siderophores that play a critical role in virulence (PubMed:17043871, PubMed:17601875). Gibberella zeae produces extracellular coprogen-type siderophores as well as the intracellular siderophore ferricrocin (PubMed:17056706). The role of extracellular siderophores is to supply iron to the fungus during plant infection, and the intracellular ferricrocin is required for intracellular iron distribution and storage with a crucial role in ascus and ascospore development (PubMed:17043871, PubMed:17056706, PubMed:17601875). SID1 catalyzes the conversion of L-ornithine to N(5)-hydroxyornithine, the first step in the biosynthesis of all hydroxamate-containing siderophores (PubMed:20507510). The assembly of extracellular coprogen-type siderophores is performed by the nonribosomal peptide synthetase (NRPS) NPS6 whereas the intracellular siderophore ferricrocin is assembled by NPS2 (PubMed:17043871, PubMed:17056706, PubMed:17601875).</text>
</comment>
<comment type="pathway">
    <text evidence="5 7">Siderophore biosynthesis.</text>
</comment>
<comment type="domain">
    <text evidence="1 12">NRP synthetases are composed of discrete domains (adenylation (A), thiolation (T) or peptidyl carrier protein (PCP) and condensation (C) domains) which when grouped together are referred to as a single module (By similarity). Each module is responsible for the recognition (via the A domain) and incorporation of a single amino acid into the growing peptide product (By similarity). Thus, an NRP synthetase is generally composed of one or more modules and can terminate in a thioesterase domain (TE) that releases the newly synthesized peptide from the enzyme (By similarity). Occasionally, methyltransferase domains (responsible for amino acid methylation) are present within the NRP synthetase (By similarity). NPS2 has the following architecture: A-T-C-A-T-C-A-T-C-A-T-C-T-C-T-C (PubMed:17043871).</text>
</comment>
<comment type="disruption phenotype">
    <text evidence="7">Leads to defective intracellular siderophore (ferricrocin) biosynthesis and sexual development (PubMed:17601875).</text>
</comment>
<comment type="similarity">
    <text evidence="11">Belongs to the NRP synthetase family.</text>
</comment>
<comment type="sequence caution" evidence="11">
    <conflict type="erroneous gene model prediction">
        <sequence resource="EMBL-CDS" id="SCB64745"/>
    </conflict>
</comment>